<evidence type="ECO:0000255" key="1">
    <source>
        <dbReference type="HAMAP-Rule" id="MF_00052"/>
    </source>
</evidence>
<evidence type="ECO:0000255" key="2">
    <source>
        <dbReference type="PROSITE-ProRule" id="PRU01319"/>
    </source>
</evidence>
<name>RNH2_STRZT</name>
<gene>
    <name evidence="1" type="primary">rnhB</name>
    <name type="ordered locus">SPT_1183</name>
</gene>
<sequence length="259" mass="28472">MATIKEIKELLVTVKELESPIFLDLEKDNRSGVQKEISKRKRAIQAELDENLRLESMLSYEKELYKQGLTLIAGIDEVGRGPLAGPVVAAAVILPKNCKIKGLNDSKKIPKKKHLEIFQAVQDQALSIGIGIIDNQVIDQVNIYEATKLAMQEAISQLSPQPEHLLIDAMKLDLPISQTSIIKGDANSLSIAAASIVAKVTRDELMKEYDQQFPGYDFATNAGYGTAKHLEGLTKLGVTPIHRTSFEPVKSLVLGKKES</sequence>
<dbReference type="EC" id="3.1.26.4" evidence="1"/>
<dbReference type="EMBL" id="CP000921">
    <property type="protein sequence ID" value="ACO23821.1"/>
    <property type="molecule type" value="Genomic_DNA"/>
</dbReference>
<dbReference type="RefSeq" id="WP_000201121.1">
    <property type="nucleotide sequence ID" value="NC_012469.1"/>
</dbReference>
<dbReference type="SMR" id="C1CRN4"/>
<dbReference type="KEGG" id="snt:SPT_1183"/>
<dbReference type="HOGENOM" id="CLU_036532_2_1_9"/>
<dbReference type="GO" id="GO:0005737">
    <property type="term" value="C:cytoplasm"/>
    <property type="evidence" value="ECO:0007669"/>
    <property type="project" value="UniProtKB-SubCell"/>
</dbReference>
<dbReference type="GO" id="GO:0032299">
    <property type="term" value="C:ribonuclease H2 complex"/>
    <property type="evidence" value="ECO:0007669"/>
    <property type="project" value="TreeGrafter"/>
</dbReference>
<dbReference type="GO" id="GO:0030145">
    <property type="term" value="F:manganese ion binding"/>
    <property type="evidence" value="ECO:0007669"/>
    <property type="project" value="UniProtKB-UniRule"/>
</dbReference>
<dbReference type="GO" id="GO:0003723">
    <property type="term" value="F:RNA binding"/>
    <property type="evidence" value="ECO:0007669"/>
    <property type="project" value="InterPro"/>
</dbReference>
<dbReference type="GO" id="GO:0004523">
    <property type="term" value="F:RNA-DNA hybrid ribonuclease activity"/>
    <property type="evidence" value="ECO:0007669"/>
    <property type="project" value="UniProtKB-UniRule"/>
</dbReference>
<dbReference type="GO" id="GO:0043137">
    <property type="term" value="P:DNA replication, removal of RNA primer"/>
    <property type="evidence" value="ECO:0007669"/>
    <property type="project" value="TreeGrafter"/>
</dbReference>
<dbReference type="GO" id="GO:0006298">
    <property type="term" value="P:mismatch repair"/>
    <property type="evidence" value="ECO:0007669"/>
    <property type="project" value="TreeGrafter"/>
</dbReference>
<dbReference type="CDD" id="cd07182">
    <property type="entry name" value="RNase_HII_bacteria_HII_like"/>
    <property type="match status" value="1"/>
</dbReference>
<dbReference type="FunFam" id="3.30.420.10:FF:000006">
    <property type="entry name" value="Ribonuclease HII"/>
    <property type="match status" value="1"/>
</dbReference>
<dbReference type="Gene3D" id="3.30.420.10">
    <property type="entry name" value="Ribonuclease H-like superfamily/Ribonuclease H"/>
    <property type="match status" value="1"/>
</dbReference>
<dbReference type="HAMAP" id="MF_00052_B">
    <property type="entry name" value="RNase_HII_B"/>
    <property type="match status" value="1"/>
</dbReference>
<dbReference type="InterPro" id="IPR022898">
    <property type="entry name" value="RNase_HII"/>
</dbReference>
<dbReference type="InterPro" id="IPR001352">
    <property type="entry name" value="RNase_HII/HIII"/>
</dbReference>
<dbReference type="InterPro" id="IPR024567">
    <property type="entry name" value="RNase_HII/HIII_dom"/>
</dbReference>
<dbReference type="InterPro" id="IPR012337">
    <property type="entry name" value="RNaseH-like_sf"/>
</dbReference>
<dbReference type="InterPro" id="IPR036397">
    <property type="entry name" value="RNaseH_sf"/>
</dbReference>
<dbReference type="NCBIfam" id="NF000594">
    <property type="entry name" value="PRK00015.1-1"/>
    <property type="match status" value="1"/>
</dbReference>
<dbReference type="NCBIfam" id="NF000595">
    <property type="entry name" value="PRK00015.1-3"/>
    <property type="match status" value="1"/>
</dbReference>
<dbReference type="PANTHER" id="PTHR10954">
    <property type="entry name" value="RIBONUCLEASE H2 SUBUNIT A"/>
    <property type="match status" value="1"/>
</dbReference>
<dbReference type="PANTHER" id="PTHR10954:SF18">
    <property type="entry name" value="RIBONUCLEASE HII"/>
    <property type="match status" value="1"/>
</dbReference>
<dbReference type="Pfam" id="PF01351">
    <property type="entry name" value="RNase_HII"/>
    <property type="match status" value="1"/>
</dbReference>
<dbReference type="SUPFAM" id="SSF53098">
    <property type="entry name" value="Ribonuclease H-like"/>
    <property type="match status" value="1"/>
</dbReference>
<dbReference type="PROSITE" id="PS51975">
    <property type="entry name" value="RNASE_H_2"/>
    <property type="match status" value="1"/>
</dbReference>
<comment type="function">
    <text evidence="1">Endonuclease that specifically degrades the RNA of RNA-DNA hybrids.</text>
</comment>
<comment type="catalytic activity">
    <reaction evidence="1">
        <text>Endonucleolytic cleavage to 5'-phosphomonoester.</text>
        <dbReference type="EC" id="3.1.26.4"/>
    </reaction>
</comment>
<comment type="cofactor">
    <cofactor evidence="1">
        <name>Mn(2+)</name>
        <dbReference type="ChEBI" id="CHEBI:29035"/>
    </cofactor>
    <cofactor evidence="1">
        <name>Mg(2+)</name>
        <dbReference type="ChEBI" id="CHEBI:18420"/>
    </cofactor>
    <text evidence="1">Manganese or magnesium. Binds 1 divalent metal ion per monomer in the absence of substrate. May bind a second metal ion after substrate binding.</text>
</comment>
<comment type="subcellular location">
    <subcellularLocation>
        <location evidence="1">Cytoplasm</location>
    </subcellularLocation>
</comment>
<comment type="similarity">
    <text evidence="1">Belongs to the RNase HII family.</text>
</comment>
<proteinExistence type="inferred from homology"/>
<keyword id="KW-0963">Cytoplasm</keyword>
<keyword id="KW-0255">Endonuclease</keyword>
<keyword id="KW-0378">Hydrolase</keyword>
<keyword id="KW-0464">Manganese</keyword>
<keyword id="KW-0479">Metal-binding</keyword>
<keyword id="KW-0540">Nuclease</keyword>
<feature type="chain" id="PRO_1000117691" description="Ribonuclease HII">
    <location>
        <begin position="1"/>
        <end position="259"/>
    </location>
</feature>
<feature type="domain" description="RNase H type-2" evidence="2">
    <location>
        <begin position="70"/>
        <end position="258"/>
    </location>
</feature>
<feature type="binding site" evidence="1">
    <location>
        <position position="76"/>
    </location>
    <ligand>
        <name>a divalent metal cation</name>
        <dbReference type="ChEBI" id="CHEBI:60240"/>
    </ligand>
</feature>
<feature type="binding site" evidence="1">
    <location>
        <position position="77"/>
    </location>
    <ligand>
        <name>a divalent metal cation</name>
        <dbReference type="ChEBI" id="CHEBI:60240"/>
    </ligand>
</feature>
<feature type="binding site" evidence="1">
    <location>
        <position position="168"/>
    </location>
    <ligand>
        <name>a divalent metal cation</name>
        <dbReference type="ChEBI" id="CHEBI:60240"/>
    </ligand>
</feature>
<organism>
    <name type="scientific">Streptococcus pneumoniae (strain Taiwan19F-14)</name>
    <dbReference type="NCBI Taxonomy" id="487213"/>
    <lineage>
        <taxon>Bacteria</taxon>
        <taxon>Bacillati</taxon>
        <taxon>Bacillota</taxon>
        <taxon>Bacilli</taxon>
        <taxon>Lactobacillales</taxon>
        <taxon>Streptococcaceae</taxon>
        <taxon>Streptococcus</taxon>
    </lineage>
</organism>
<protein>
    <recommendedName>
        <fullName evidence="1">Ribonuclease HII</fullName>
        <shortName evidence="1">RNase HII</shortName>
        <ecNumber evidence="1">3.1.26.4</ecNumber>
    </recommendedName>
</protein>
<reference key="1">
    <citation type="journal article" date="2010" name="Genome Biol.">
        <title>Structure and dynamics of the pan-genome of Streptococcus pneumoniae and closely related species.</title>
        <authorList>
            <person name="Donati C."/>
            <person name="Hiller N.L."/>
            <person name="Tettelin H."/>
            <person name="Muzzi A."/>
            <person name="Croucher N.J."/>
            <person name="Angiuoli S.V."/>
            <person name="Oggioni M."/>
            <person name="Dunning Hotopp J.C."/>
            <person name="Hu F.Z."/>
            <person name="Riley D.R."/>
            <person name="Covacci A."/>
            <person name="Mitchell T.J."/>
            <person name="Bentley S.D."/>
            <person name="Kilian M."/>
            <person name="Ehrlich G.D."/>
            <person name="Rappuoli R."/>
            <person name="Moxon E.R."/>
            <person name="Masignani V."/>
        </authorList>
    </citation>
    <scope>NUCLEOTIDE SEQUENCE [LARGE SCALE GENOMIC DNA]</scope>
    <source>
        <strain>Taiwan19F-14</strain>
    </source>
</reference>
<accession>C1CRN4</accession>